<comment type="function">
    <text evidence="1">Binds directly to 16S ribosomal RNA.</text>
</comment>
<comment type="similarity">
    <text evidence="1">Belongs to the bacterial ribosomal protein bS20 family.</text>
</comment>
<dbReference type="EMBL" id="CU458896">
    <property type="protein sequence ID" value="CAM61719.1"/>
    <property type="molecule type" value="Genomic_DNA"/>
</dbReference>
<dbReference type="RefSeq" id="WP_005060261.1">
    <property type="nucleotide sequence ID" value="NZ_MLCG01000002.1"/>
</dbReference>
<dbReference type="SMR" id="B1MN07"/>
<dbReference type="GeneID" id="93378586"/>
<dbReference type="KEGG" id="mab:MAB_1634c"/>
<dbReference type="Proteomes" id="UP000007137">
    <property type="component" value="Chromosome"/>
</dbReference>
<dbReference type="GO" id="GO:0005829">
    <property type="term" value="C:cytosol"/>
    <property type="evidence" value="ECO:0007669"/>
    <property type="project" value="TreeGrafter"/>
</dbReference>
<dbReference type="GO" id="GO:0015935">
    <property type="term" value="C:small ribosomal subunit"/>
    <property type="evidence" value="ECO:0007669"/>
    <property type="project" value="TreeGrafter"/>
</dbReference>
<dbReference type="GO" id="GO:0070181">
    <property type="term" value="F:small ribosomal subunit rRNA binding"/>
    <property type="evidence" value="ECO:0007669"/>
    <property type="project" value="TreeGrafter"/>
</dbReference>
<dbReference type="GO" id="GO:0003735">
    <property type="term" value="F:structural constituent of ribosome"/>
    <property type="evidence" value="ECO:0007669"/>
    <property type="project" value="InterPro"/>
</dbReference>
<dbReference type="GO" id="GO:0006412">
    <property type="term" value="P:translation"/>
    <property type="evidence" value="ECO:0007669"/>
    <property type="project" value="UniProtKB-UniRule"/>
</dbReference>
<dbReference type="FunFam" id="1.20.58.110:FF:000001">
    <property type="entry name" value="30S ribosomal protein S20"/>
    <property type="match status" value="1"/>
</dbReference>
<dbReference type="Gene3D" id="1.20.58.110">
    <property type="entry name" value="Ribosomal protein S20"/>
    <property type="match status" value="1"/>
</dbReference>
<dbReference type="HAMAP" id="MF_00500">
    <property type="entry name" value="Ribosomal_bS20"/>
    <property type="match status" value="1"/>
</dbReference>
<dbReference type="InterPro" id="IPR002583">
    <property type="entry name" value="Ribosomal_bS20"/>
</dbReference>
<dbReference type="InterPro" id="IPR036510">
    <property type="entry name" value="Ribosomal_bS20_sf"/>
</dbReference>
<dbReference type="NCBIfam" id="TIGR00029">
    <property type="entry name" value="S20"/>
    <property type="match status" value="1"/>
</dbReference>
<dbReference type="PANTHER" id="PTHR33398">
    <property type="entry name" value="30S RIBOSOMAL PROTEIN S20"/>
    <property type="match status" value="1"/>
</dbReference>
<dbReference type="PANTHER" id="PTHR33398:SF1">
    <property type="entry name" value="SMALL RIBOSOMAL SUBUNIT PROTEIN BS20C"/>
    <property type="match status" value="1"/>
</dbReference>
<dbReference type="Pfam" id="PF01649">
    <property type="entry name" value="Ribosomal_S20p"/>
    <property type="match status" value="1"/>
</dbReference>
<dbReference type="SUPFAM" id="SSF46992">
    <property type="entry name" value="Ribosomal protein S20"/>
    <property type="match status" value="1"/>
</dbReference>
<gene>
    <name evidence="1" type="primary">rpsT</name>
    <name type="ordered locus">MAB_1634c</name>
</gene>
<name>RS20_MYCA9</name>
<protein>
    <recommendedName>
        <fullName evidence="1">Small ribosomal subunit protein bS20</fullName>
    </recommendedName>
    <alternativeName>
        <fullName evidence="3">30S ribosomal protein S20</fullName>
    </alternativeName>
</protein>
<evidence type="ECO:0000255" key="1">
    <source>
        <dbReference type="HAMAP-Rule" id="MF_00500"/>
    </source>
</evidence>
<evidence type="ECO:0000256" key="2">
    <source>
        <dbReference type="SAM" id="MobiDB-lite"/>
    </source>
</evidence>
<evidence type="ECO:0000305" key="3"/>
<reference key="1">
    <citation type="journal article" date="2009" name="PLoS ONE">
        <title>Non mycobacterial virulence genes in the genome of the emerging pathogen Mycobacterium abscessus.</title>
        <authorList>
            <person name="Ripoll F."/>
            <person name="Pasek S."/>
            <person name="Schenowitz C."/>
            <person name="Dossat C."/>
            <person name="Barbe V."/>
            <person name="Rottman M."/>
            <person name="Macheras E."/>
            <person name="Heym B."/>
            <person name="Herrmann J.L."/>
            <person name="Daffe M."/>
            <person name="Brosch R."/>
            <person name="Risler J.L."/>
            <person name="Gaillard J.L."/>
        </authorList>
    </citation>
    <scope>NUCLEOTIDE SEQUENCE [LARGE SCALE GENOMIC DNA]</scope>
    <source>
        <strain>ATCC 19977 / DSM 44196 / CCUG 20993 / CIP 104536 / JCM 13569 / NCTC 13031 / TMC 1543 / L948</strain>
    </source>
</reference>
<accession>B1MN07</accession>
<proteinExistence type="inferred from homology"/>
<organism>
    <name type="scientific">Mycobacteroides abscessus (strain ATCC 19977 / DSM 44196 / CCUG 20993 / CIP 104536 / JCM 13569 / NCTC 13031 / TMC 1543 / L948)</name>
    <name type="common">Mycobacterium abscessus</name>
    <dbReference type="NCBI Taxonomy" id="561007"/>
    <lineage>
        <taxon>Bacteria</taxon>
        <taxon>Bacillati</taxon>
        <taxon>Actinomycetota</taxon>
        <taxon>Actinomycetes</taxon>
        <taxon>Mycobacteriales</taxon>
        <taxon>Mycobacteriaceae</taxon>
        <taxon>Mycobacteroides</taxon>
        <taxon>Mycobacteroides abscessus</taxon>
    </lineage>
</organism>
<keyword id="KW-1185">Reference proteome</keyword>
<keyword id="KW-0687">Ribonucleoprotein</keyword>
<keyword id="KW-0689">Ribosomal protein</keyword>
<keyword id="KW-0694">RNA-binding</keyword>
<keyword id="KW-0699">rRNA-binding</keyword>
<feature type="chain" id="PRO_1000126480" description="Small ribosomal subunit protein bS20">
    <location>
        <begin position="1"/>
        <end position="86"/>
    </location>
</feature>
<feature type="region of interest" description="Disordered" evidence="2">
    <location>
        <begin position="1"/>
        <end position="25"/>
    </location>
</feature>
<feature type="compositionally biased region" description="Basic and acidic residues" evidence="2">
    <location>
        <begin position="1"/>
        <end position="18"/>
    </location>
</feature>
<sequence length="86" mass="9479">MANIKSQEKRIRTNERARLRNQATKSSLRTAIRGLREAIAEGDKEKAGELLVSTSRKLDKAVTKGVIHKNQAANKKSALALALNKL</sequence>